<accession>Q5RDF1</accession>
<sequence length="1409" mass="156514">MWSLTASEGESTTAHFFLGAGDEGLGTRGIGMRPEESDSELLEDEEDEVPPEPQIIVGICAMTKKSKSKPMTQILERLCRFDYLTVIILGEDVILNEPVENWPSCHCLISFHSKGFPLDKAVAYSKLRNPFLINDLAMQYYIQDRREVYRILQEEGIDLPRYAVLNRDPARPEECNLIEGEDQVEVNGAVFPKPFVEKPVSAEDHNVYIYYPSSAGGGSQRLFRKIGSRSSVYSPESIVRKTGSYIYEEFMPTDGTDVKVYAVGPDYAHAEARKSPALDGKVERDSEGKEIRYPVMLTAMEKLVARKVCVAFRQTVCGFDLLRANGHSFVCDVNGFSFVKNSMKYYDDCAKILGNTIMRELAPQFQIPWSIPTEAEDIPIVPTTSGTMMELRCVIAIIRHGDRTPKQKMKMEVKHPRFFALFEKHGGYKTGKLKLKRPEQLQEVLDITRLLLAELEKEPGGEIEEKTGKLEQLKSVLEMYGHFSGINRKVQSTYYPHGVKASNEGQDPQRETLAPSLLLVLKWGGELTPAGRVQAEELGRAFRCMYPGGQGDYAGFPGCGLLRLHSTFRHDLKIYASDEGRVQMTAAAFAKGLLALEGELTPILVQMVKSANMNGLLDSDGDSLSSCQHRVKARLHHILQQDAPFGPEDYDELAPTRSTSLLNSMTVIQNPVKVCDQVFALIENLTHQIRERMQDPRSVDLQLYHSETLELMLQRWSKLERDFRQKSGRYDISKIPDIYDCVKYDVQHNGSLGLQGAAELLRLSKALADVVIPQEYGISREEKLEIAVGFCLPLLRKILLDLQRTHEDESVNKLHPLESHVHSLLSVFRYGGLLDETQDAQWQRALDYLSAISELNYMTQIVIMLYEDNTQDPLSEERFHVELHFSPGVKGVEEEGSAPAGCGFRPASSENEEMKTNEGSMENLCPGKASDEPDRALQTSPQPPEGPGLPRRSPLIRNRKAGSMEVLSETSSSRPGGYRLFSSSRPPTEMKQSGLGSQCTGLFSTTVLGGSFSAPNLQDYARSHGKKLPPASLKHRDELLFVPAVKRFSVSFAKHPTNGFEGCSMVPTIYPLETLHNALSLHQVSEFLSRVCQRHTDAQAQASAALFDSMHSSQASDNPFSPPRTLHSPPLQLQQRSEKPPWYSSGPSSTVSSAGPSSPTTVDGNSQFGFSDQPSLNSHVAEEHQGLGLLLETPGSGAQELSIEGEQELFEPNQSPQVPPVETSQPYEEVSQPCQEVPDISQPCQDISEALSQPCQEVPDISQQCQENHDNGNHTCQEVPHISQPCQKSSQLCQKVSEEVCQLCLENSEEVSQPCQGVSVEVGKLVHKFHVGVGSLVQETLVEVGSPAEEIPEEVIQPYQGFSVEVGRLAQEASAINLLSQGIPEIDKPSQEFPEEIDLQAQEVPEEIN</sequence>
<feature type="chain" id="PRO_0000315690" description="Inositol hexakisphosphate and diphosphoinositol-pentakisphosphate kinase 1">
    <location>
        <begin position="1"/>
        <end position="1409"/>
    </location>
</feature>
<feature type="region of interest" description="Polyphosphoinositide-binding domain" evidence="3">
    <location>
        <begin position="382"/>
        <end position="453"/>
    </location>
</feature>
<feature type="region of interest" description="Disordered" evidence="4">
    <location>
        <begin position="891"/>
        <end position="996"/>
    </location>
</feature>
<feature type="region of interest" description="Disordered" evidence="4">
    <location>
        <begin position="1110"/>
        <end position="1183"/>
    </location>
</feature>
<feature type="compositionally biased region" description="Polar residues" evidence="4">
    <location>
        <begin position="981"/>
        <end position="996"/>
    </location>
</feature>
<feature type="compositionally biased region" description="Polar residues" evidence="4">
    <location>
        <begin position="1110"/>
        <end position="1119"/>
    </location>
</feature>
<feature type="compositionally biased region" description="Low complexity" evidence="4">
    <location>
        <begin position="1144"/>
        <end position="1162"/>
    </location>
</feature>
<feature type="compositionally biased region" description="Polar residues" evidence="4">
    <location>
        <begin position="1163"/>
        <end position="1178"/>
    </location>
</feature>
<feature type="binding site" evidence="2">
    <location>
        <begin position="64"/>
        <end position="65"/>
    </location>
    <ligand>
        <name>substrate</name>
    </ligand>
</feature>
<feature type="binding site" evidence="2">
    <location>
        <position position="145"/>
    </location>
    <ligand>
        <name>ATP</name>
        <dbReference type="ChEBI" id="CHEBI:30616"/>
    </ligand>
</feature>
<feature type="binding site" evidence="2">
    <location>
        <position position="198"/>
    </location>
    <ligand>
        <name>ATP</name>
        <dbReference type="ChEBI" id="CHEBI:30616"/>
    </ligand>
</feature>
<feature type="binding site" evidence="2">
    <location>
        <position position="205"/>
    </location>
    <ligand>
        <name>ATP</name>
        <dbReference type="ChEBI" id="CHEBI:30616"/>
    </ligand>
</feature>
<feature type="binding site" evidence="2">
    <location>
        <begin position="224"/>
        <end position="225"/>
    </location>
    <ligand>
        <name>substrate</name>
    </ligand>
</feature>
<feature type="binding site" evidence="2">
    <location>
        <position position="224"/>
    </location>
    <ligand>
        <name>ATP</name>
        <dbReference type="ChEBI" id="CHEBI:30616"/>
    </ligand>
</feature>
<feature type="binding site" evidence="2">
    <location>
        <begin position="248"/>
        <end position="251"/>
    </location>
    <ligand>
        <name>ATP</name>
        <dbReference type="ChEBI" id="CHEBI:30616"/>
    </ligand>
</feature>
<feature type="binding site" evidence="2">
    <location>
        <begin position="257"/>
        <end position="259"/>
    </location>
    <ligand>
        <name>ATP</name>
        <dbReference type="ChEBI" id="CHEBI:30616"/>
    </ligand>
</feature>
<feature type="binding site" evidence="2">
    <location>
        <position position="259"/>
    </location>
    <ligand>
        <name>substrate</name>
    </ligand>
</feature>
<feature type="binding site" evidence="2">
    <location>
        <position position="273"/>
    </location>
    <ligand>
        <name>substrate</name>
    </ligand>
</feature>
<feature type="binding site" evidence="2">
    <location>
        <position position="275"/>
    </location>
    <ligand>
        <name>ATP</name>
        <dbReference type="ChEBI" id="CHEBI:30616"/>
    </ligand>
</feature>
<feature type="binding site" evidence="2">
    <location>
        <position position="320"/>
    </location>
    <ligand>
        <name>ATP</name>
        <dbReference type="ChEBI" id="CHEBI:30616"/>
    </ligand>
</feature>
<feature type="binding site" evidence="2">
    <location>
        <begin position="332"/>
        <end position="334"/>
    </location>
    <ligand>
        <name>ATP</name>
        <dbReference type="ChEBI" id="CHEBI:30616"/>
    </ligand>
</feature>
<feature type="binding site" evidence="2">
    <location>
        <begin position="337"/>
        <end position="340"/>
    </location>
    <ligand>
        <name>substrate</name>
    </ligand>
</feature>
<feature type="modified residue" description="Phosphoserine" evidence="3">
    <location>
        <position position="920"/>
    </location>
</feature>
<feature type="modified residue" description="Phosphoserine" evidence="3">
    <location>
        <position position="963"/>
    </location>
</feature>
<feature type="modified residue" description="Phosphoserine" evidence="3">
    <location>
        <position position="1013"/>
    </location>
</feature>
<feature type="modified residue" description="Phosphoserine" evidence="3">
    <location>
        <position position="1049"/>
    </location>
</feature>
<feature type="modified residue" description="Phosphoserine" evidence="1">
    <location>
        <position position="1121"/>
    </location>
</feature>
<feature type="modified residue" description="Phosphoserine" evidence="3">
    <location>
        <position position="1128"/>
    </location>
</feature>
<dbReference type="EC" id="2.7.4.24" evidence="3"/>
<dbReference type="EMBL" id="CR857961">
    <property type="protein sequence ID" value="CAH90206.1"/>
    <property type="molecule type" value="mRNA"/>
</dbReference>
<dbReference type="SMR" id="Q5RDF1"/>
<dbReference type="FunCoup" id="Q5RDF1">
    <property type="interactions" value="983"/>
</dbReference>
<dbReference type="STRING" id="9601.ENSPPYP00000007270"/>
<dbReference type="eggNOG" id="KOG1057">
    <property type="taxonomic scope" value="Eukaryota"/>
</dbReference>
<dbReference type="InParanoid" id="Q5RDF1"/>
<dbReference type="Proteomes" id="UP000001595">
    <property type="component" value="Unplaced"/>
</dbReference>
<dbReference type="GO" id="GO:0005829">
    <property type="term" value="C:cytosol"/>
    <property type="evidence" value="ECO:0000250"/>
    <property type="project" value="UniProtKB"/>
</dbReference>
<dbReference type="GO" id="GO:0005886">
    <property type="term" value="C:plasma membrane"/>
    <property type="evidence" value="ECO:0007669"/>
    <property type="project" value="UniProtKB-SubCell"/>
</dbReference>
<dbReference type="GO" id="GO:0033857">
    <property type="term" value="F:5-diphosphoinositol pentakisphosphate 1-kinase activity"/>
    <property type="evidence" value="ECO:0000250"/>
    <property type="project" value="UniProtKB"/>
</dbReference>
<dbReference type="GO" id="GO:0005524">
    <property type="term" value="F:ATP binding"/>
    <property type="evidence" value="ECO:0000250"/>
    <property type="project" value="UniProtKB"/>
</dbReference>
<dbReference type="GO" id="GO:0052723">
    <property type="term" value="F:inositol hexakisphosphate 1-kinase activity"/>
    <property type="evidence" value="ECO:0007669"/>
    <property type="project" value="RHEA"/>
</dbReference>
<dbReference type="GO" id="GO:0000832">
    <property type="term" value="F:inositol hexakisphosphate 5-kinase activity"/>
    <property type="evidence" value="ECO:0000250"/>
    <property type="project" value="UniProtKB"/>
</dbReference>
<dbReference type="GO" id="GO:0000828">
    <property type="term" value="F:inositol hexakisphosphate kinase activity"/>
    <property type="evidence" value="ECO:0000250"/>
    <property type="project" value="UniProtKB"/>
</dbReference>
<dbReference type="GO" id="GO:0000827">
    <property type="term" value="F:inositol-1,3,4,5,6-pentakisphosphate kinase activity"/>
    <property type="evidence" value="ECO:0000250"/>
    <property type="project" value="UniProtKB"/>
</dbReference>
<dbReference type="GO" id="GO:0006020">
    <property type="term" value="P:inositol metabolic process"/>
    <property type="evidence" value="ECO:0000250"/>
    <property type="project" value="UniProtKB"/>
</dbReference>
<dbReference type="GO" id="GO:0032958">
    <property type="term" value="P:inositol phosphate biosynthetic process"/>
    <property type="evidence" value="ECO:0007669"/>
    <property type="project" value="TreeGrafter"/>
</dbReference>
<dbReference type="CDD" id="cd07061">
    <property type="entry name" value="HP_HAP_like"/>
    <property type="match status" value="1"/>
</dbReference>
<dbReference type="FunFam" id="3.30.470.20:FF:000003">
    <property type="entry name" value="Inositol hexakisphosphate and diphosphoinositol-pentakisphosphate kinase"/>
    <property type="match status" value="1"/>
</dbReference>
<dbReference type="FunFam" id="3.40.50.11950:FF:000001">
    <property type="entry name" value="Inositol hexakisphosphate and diphosphoinositol-pentakisphosphate kinase"/>
    <property type="match status" value="1"/>
</dbReference>
<dbReference type="FunFam" id="3.40.50.11950:FF:000003">
    <property type="entry name" value="Inositol hexakisphosphate and diphosphoinositol-pentakisphosphate kinase"/>
    <property type="match status" value="1"/>
</dbReference>
<dbReference type="Gene3D" id="3.40.50.11950">
    <property type="match status" value="1"/>
</dbReference>
<dbReference type="Gene3D" id="3.30.470.20">
    <property type="entry name" value="ATP-grasp fold, B domain"/>
    <property type="match status" value="1"/>
</dbReference>
<dbReference type="Gene3D" id="3.40.50.1240">
    <property type="entry name" value="Phosphoglycerate mutase-like"/>
    <property type="match status" value="1"/>
</dbReference>
<dbReference type="InterPro" id="IPR033379">
    <property type="entry name" value="Acid_Pase_AS"/>
</dbReference>
<dbReference type="InterPro" id="IPR000560">
    <property type="entry name" value="His_Pase_clade-2"/>
</dbReference>
<dbReference type="InterPro" id="IPR037446">
    <property type="entry name" value="His_Pase_VIP1"/>
</dbReference>
<dbReference type="InterPro" id="IPR029033">
    <property type="entry name" value="His_PPase_superfam"/>
</dbReference>
<dbReference type="InterPro" id="IPR040557">
    <property type="entry name" value="VIP1_N"/>
</dbReference>
<dbReference type="PANTHER" id="PTHR12750">
    <property type="entry name" value="DIPHOSPHOINOSITOL PENTAKISPHOSPHATE KINASE"/>
    <property type="match status" value="1"/>
</dbReference>
<dbReference type="PANTHER" id="PTHR12750:SF11">
    <property type="entry name" value="INOSITOL HEXAKISPHOSPHATE AND DIPHOSPHOINOSITOL-PENTAKISPHOSPHATE KINASE 1"/>
    <property type="match status" value="1"/>
</dbReference>
<dbReference type="Pfam" id="PF00328">
    <property type="entry name" value="His_Phos_2"/>
    <property type="match status" value="1"/>
</dbReference>
<dbReference type="Pfam" id="PF18086">
    <property type="entry name" value="PPIP5K2_N"/>
    <property type="match status" value="1"/>
</dbReference>
<dbReference type="SUPFAM" id="SSF53254">
    <property type="entry name" value="Phosphoglycerate mutase-like"/>
    <property type="match status" value="1"/>
</dbReference>
<dbReference type="PROSITE" id="PS00616">
    <property type="entry name" value="HIS_ACID_PHOSPHAT_1"/>
    <property type="match status" value="1"/>
</dbReference>
<keyword id="KW-0067">ATP-binding</keyword>
<keyword id="KW-1003">Cell membrane</keyword>
<keyword id="KW-0963">Cytoplasm</keyword>
<keyword id="KW-0418">Kinase</keyword>
<keyword id="KW-0472">Membrane</keyword>
<keyword id="KW-0547">Nucleotide-binding</keyword>
<keyword id="KW-0597">Phosphoprotein</keyword>
<keyword id="KW-1185">Reference proteome</keyword>
<keyword id="KW-0808">Transferase</keyword>
<reference key="1">
    <citation type="submission" date="2004-11" db="EMBL/GenBank/DDBJ databases">
        <authorList>
            <consortium name="The German cDNA consortium"/>
        </authorList>
    </citation>
    <scope>NUCLEOTIDE SEQUENCE [LARGE SCALE MRNA]</scope>
    <source>
        <tissue>Kidney</tissue>
    </source>
</reference>
<name>VIP1_PONAB</name>
<gene>
    <name evidence="3" type="primary">PPIP5K1</name>
    <name type="synonym">HISPPD2A</name>
    <name type="synonym">VIP1</name>
</gene>
<protein>
    <recommendedName>
        <fullName evidence="3">Inositol hexakisphosphate and diphosphoinositol-pentakisphosphate kinase 1</fullName>
        <ecNumber evidence="3">2.7.4.24</ecNumber>
    </recommendedName>
    <alternativeName>
        <fullName>Diphosphoinositol pentakisphosphate kinase 1</fullName>
    </alternativeName>
    <alternativeName>
        <fullName>Histidine acid phosphatase domain-containing protein 2A</fullName>
    </alternativeName>
    <alternativeName>
        <fullName>InsP6 and PP-IP5 kinase 1</fullName>
    </alternativeName>
    <alternativeName>
        <fullName>VIP1 homolog</fullName>
    </alternativeName>
</protein>
<evidence type="ECO:0000250" key="1">
    <source>
        <dbReference type="UniProtKB" id="A2ARP1"/>
    </source>
</evidence>
<evidence type="ECO:0000250" key="2">
    <source>
        <dbReference type="UniProtKB" id="O43314"/>
    </source>
</evidence>
<evidence type="ECO:0000250" key="3">
    <source>
        <dbReference type="UniProtKB" id="Q6PFW1"/>
    </source>
</evidence>
<evidence type="ECO:0000256" key="4">
    <source>
        <dbReference type="SAM" id="MobiDB-lite"/>
    </source>
</evidence>
<evidence type="ECO:0000305" key="5"/>
<organism>
    <name type="scientific">Pongo abelii</name>
    <name type="common">Sumatran orangutan</name>
    <name type="synonym">Pongo pygmaeus abelii</name>
    <dbReference type="NCBI Taxonomy" id="9601"/>
    <lineage>
        <taxon>Eukaryota</taxon>
        <taxon>Metazoa</taxon>
        <taxon>Chordata</taxon>
        <taxon>Craniata</taxon>
        <taxon>Vertebrata</taxon>
        <taxon>Euteleostomi</taxon>
        <taxon>Mammalia</taxon>
        <taxon>Eutheria</taxon>
        <taxon>Euarchontoglires</taxon>
        <taxon>Primates</taxon>
        <taxon>Haplorrhini</taxon>
        <taxon>Catarrhini</taxon>
        <taxon>Hominidae</taxon>
        <taxon>Pongo</taxon>
    </lineage>
</organism>
<proteinExistence type="evidence at transcript level"/>
<comment type="function">
    <text evidence="3">Bifunctional inositol kinase that acts in concert with the IP6K kinases IP6K1, IP6K2 and IP6K3 to synthesize the diphosphate group-containing inositol pyrophosphates diphosphoinositol pentakisphosphate, PP-InsP5, and bis-diphosphoinositol tetrakisphosphate, (PP)2-InsP4. PP-InsP5 and (PP)2-InsP4, also respectively called InsP7 and InsP8, regulate a variety of cellular processes, including apoptosis, vesicle trafficking, cytoskeletal dynamics, exocytosis, insulin signaling and neutrophil activation. Phosphorylates inositol hexakisphosphate (InsP6) at position 1 to produce PP-InsP5 which is in turn phosphorylated by IP6Ks to produce (PP)2-InsP4. Alternatively, phosphorylates PP-InsP5 at position 1, produced by IP6Ks from InsP6, to produce (PP)2-InsP4. Activated when cells are exposed to hyperosmotic stress.</text>
</comment>
<comment type="catalytic activity">
    <reaction evidence="3">
        <text>1D-myo-inositol hexakisphosphate + ATP = 1-diphospho-1D-myo-inositol 2,3,4,5,6-pentakisphosphate + ADP</text>
        <dbReference type="Rhea" id="RHEA:37459"/>
        <dbReference type="ChEBI" id="CHEBI:30616"/>
        <dbReference type="ChEBI" id="CHEBI:58130"/>
        <dbReference type="ChEBI" id="CHEBI:74946"/>
        <dbReference type="ChEBI" id="CHEBI:456216"/>
        <dbReference type="EC" id="2.7.4.24"/>
    </reaction>
    <physiologicalReaction direction="left-to-right" evidence="3">
        <dbReference type="Rhea" id="RHEA:37460"/>
    </physiologicalReaction>
</comment>
<comment type="catalytic activity">
    <reaction evidence="3">
        <text>5-diphospho-1D-myo-inositol 1,2,3,4,6-pentakisphosphate + ATP + H(+) = 1,5-bis(diphospho)-1D-myo-inositol 2,3,4,6-tetrakisphosphate + ADP</text>
        <dbReference type="Rhea" id="RHEA:10276"/>
        <dbReference type="ChEBI" id="CHEBI:15378"/>
        <dbReference type="ChEBI" id="CHEBI:30616"/>
        <dbReference type="ChEBI" id="CHEBI:58628"/>
        <dbReference type="ChEBI" id="CHEBI:77983"/>
        <dbReference type="ChEBI" id="CHEBI:456216"/>
        <dbReference type="EC" id="2.7.4.24"/>
    </reaction>
    <physiologicalReaction direction="left-to-right" evidence="3">
        <dbReference type="Rhea" id="RHEA:10277"/>
    </physiologicalReaction>
</comment>
<comment type="subcellular location">
    <subcellularLocation>
        <location evidence="3">Cytoplasm</location>
        <location evidence="3">Cytosol</location>
    </subcellularLocation>
    <subcellularLocation>
        <location evidence="3">Cell membrane</location>
    </subcellularLocation>
    <text evidence="3">Relocalizes to the plasma membrane upon activation of the PtdIns 3-kinase pathway.</text>
</comment>
<comment type="domain">
    <text evidence="3">The C-terminal acid phosphatase-like domain binds PtdIns(3,4,5)P3 and InsP6. Despite its similarity with the phosphatase domain of histidine acid phosphatases, it has no phosphatase activity.</text>
</comment>
<comment type="similarity">
    <text evidence="5">Belongs to the histidine acid phosphatase family. VIP1 subfamily.</text>
</comment>